<proteinExistence type="inferred from homology"/>
<organism>
    <name type="scientific">Chloroherpeton thalassium (strain ATCC 35110 / GB-78)</name>
    <dbReference type="NCBI Taxonomy" id="517418"/>
    <lineage>
        <taxon>Bacteria</taxon>
        <taxon>Pseudomonadati</taxon>
        <taxon>Chlorobiota</taxon>
        <taxon>Chlorobiia</taxon>
        <taxon>Chlorobiales</taxon>
        <taxon>Chloroherpetonaceae</taxon>
        <taxon>Chloroherpeton</taxon>
    </lineage>
</organism>
<keyword id="KW-0067">ATP-binding</keyword>
<keyword id="KW-0963">Cytoplasm</keyword>
<keyword id="KW-0418">Kinase</keyword>
<keyword id="KW-0460">Magnesium</keyword>
<keyword id="KW-0479">Metal-binding</keyword>
<keyword id="KW-0546">Nucleotide metabolism</keyword>
<keyword id="KW-0547">Nucleotide-binding</keyword>
<keyword id="KW-0597">Phosphoprotein</keyword>
<keyword id="KW-1185">Reference proteome</keyword>
<keyword id="KW-0808">Transferase</keyword>
<protein>
    <recommendedName>
        <fullName evidence="1">Nucleoside diphosphate kinase</fullName>
        <shortName evidence="1">NDK</shortName>
        <shortName evidence="1">NDP kinase</shortName>
        <ecNumber evidence="1">2.7.4.6</ecNumber>
    </recommendedName>
    <alternativeName>
        <fullName evidence="1">Nucleoside-2-P kinase</fullName>
    </alternativeName>
</protein>
<name>NDK_CHLT3</name>
<accession>B3QRV1</accession>
<reference key="1">
    <citation type="submission" date="2008-06" db="EMBL/GenBank/DDBJ databases">
        <title>Complete sequence of Chloroherpeton thalassium ATCC 35110.</title>
        <authorList>
            <consortium name="US DOE Joint Genome Institute"/>
            <person name="Lucas S."/>
            <person name="Copeland A."/>
            <person name="Lapidus A."/>
            <person name="Glavina del Rio T."/>
            <person name="Dalin E."/>
            <person name="Tice H."/>
            <person name="Bruce D."/>
            <person name="Goodwin L."/>
            <person name="Pitluck S."/>
            <person name="Schmutz J."/>
            <person name="Larimer F."/>
            <person name="Land M."/>
            <person name="Hauser L."/>
            <person name="Kyrpides N."/>
            <person name="Mikhailova N."/>
            <person name="Liu Z."/>
            <person name="Li T."/>
            <person name="Zhao F."/>
            <person name="Overmann J."/>
            <person name="Bryant D.A."/>
            <person name="Richardson P."/>
        </authorList>
    </citation>
    <scope>NUCLEOTIDE SEQUENCE [LARGE SCALE GENOMIC DNA]</scope>
    <source>
        <strain>ATCC 35110 / GB-78</strain>
    </source>
</reference>
<sequence>MERTLAILKPDCVRKNLIGAAIEKIQSAGFKVVAMKMTRLTKETAGEFYAVHKARPFYGELVEFMSSGACVPLMLEKENAVADFRTLIGATDPAEAAEGTIRKLYADSKGENIVHGSDSVENAKIECGFFFSTQEAVANMA</sequence>
<dbReference type="EC" id="2.7.4.6" evidence="1"/>
<dbReference type="EMBL" id="CP001100">
    <property type="protein sequence ID" value="ACF13904.1"/>
    <property type="molecule type" value="Genomic_DNA"/>
</dbReference>
<dbReference type="RefSeq" id="WP_012499988.1">
    <property type="nucleotide sequence ID" value="NC_011026.1"/>
</dbReference>
<dbReference type="SMR" id="B3QRV1"/>
<dbReference type="STRING" id="517418.Ctha_1445"/>
<dbReference type="KEGG" id="cts:Ctha_1445"/>
<dbReference type="eggNOG" id="COG0105">
    <property type="taxonomic scope" value="Bacteria"/>
</dbReference>
<dbReference type="HOGENOM" id="CLU_060216_8_1_10"/>
<dbReference type="OrthoDB" id="9801161at2"/>
<dbReference type="Proteomes" id="UP000001208">
    <property type="component" value="Chromosome"/>
</dbReference>
<dbReference type="GO" id="GO:0005737">
    <property type="term" value="C:cytoplasm"/>
    <property type="evidence" value="ECO:0007669"/>
    <property type="project" value="UniProtKB-SubCell"/>
</dbReference>
<dbReference type="GO" id="GO:0005524">
    <property type="term" value="F:ATP binding"/>
    <property type="evidence" value="ECO:0007669"/>
    <property type="project" value="UniProtKB-UniRule"/>
</dbReference>
<dbReference type="GO" id="GO:0046872">
    <property type="term" value="F:metal ion binding"/>
    <property type="evidence" value="ECO:0007669"/>
    <property type="project" value="UniProtKB-KW"/>
</dbReference>
<dbReference type="GO" id="GO:0004550">
    <property type="term" value="F:nucleoside diphosphate kinase activity"/>
    <property type="evidence" value="ECO:0007669"/>
    <property type="project" value="UniProtKB-UniRule"/>
</dbReference>
<dbReference type="GO" id="GO:0006241">
    <property type="term" value="P:CTP biosynthetic process"/>
    <property type="evidence" value="ECO:0007669"/>
    <property type="project" value="UniProtKB-UniRule"/>
</dbReference>
<dbReference type="GO" id="GO:0006183">
    <property type="term" value="P:GTP biosynthetic process"/>
    <property type="evidence" value="ECO:0007669"/>
    <property type="project" value="UniProtKB-UniRule"/>
</dbReference>
<dbReference type="GO" id="GO:0006228">
    <property type="term" value="P:UTP biosynthetic process"/>
    <property type="evidence" value="ECO:0007669"/>
    <property type="project" value="UniProtKB-UniRule"/>
</dbReference>
<dbReference type="CDD" id="cd04413">
    <property type="entry name" value="NDPk_I"/>
    <property type="match status" value="1"/>
</dbReference>
<dbReference type="FunFam" id="3.30.70.141:FF:000017">
    <property type="entry name" value="Nucleoside diphosphate kinase"/>
    <property type="match status" value="1"/>
</dbReference>
<dbReference type="Gene3D" id="3.30.70.141">
    <property type="entry name" value="Nucleoside diphosphate kinase-like domain"/>
    <property type="match status" value="1"/>
</dbReference>
<dbReference type="HAMAP" id="MF_00451">
    <property type="entry name" value="NDP_kinase"/>
    <property type="match status" value="1"/>
</dbReference>
<dbReference type="InterPro" id="IPR034907">
    <property type="entry name" value="NDK-like_dom"/>
</dbReference>
<dbReference type="InterPro" id="IPR036850">
    <property type="entry name" value="NDK-like_dom_sf"/>
</dbReference>
<dbReference type="InterPro" id="IPR001564">
    <property type="entry name" value="Nucleoside_diP_kinase"/>
</dbReference>
<dbReference type="InterPro" id="IPR023005">
    <property type="entry name" value="Nucleoside_diP_kinase_AS"/>
</dbReference>
<dbReference type="NCBIfam" id="NF001908">
    <property type="entry name" value="PRK00668.1"/>
    <property type="match status" value="1"/>
</dbReference>
<dbReference type="NCBIfam" id="NF011113">
    <property type="entry name" value="PRK14541.1"/>
    <property type="match status" value="1"/>
</dbReference>
<dbReference type="PANTHER" id="PTHR46161">
    <property type="entry name" value="NUCLEOSIDE DIPHOSPHATE KINASE"/>
    <property type="match status" value="1"/>
</dbReference>
<dbReference type="PANTHER" id="PTHR46161:SF3">
    <property type="entry name" value="NUCLEOSIDE DIPHOSPHATE KINASE DDB_G0292928-RELATED"/>
    <property type="match status" value="1"/>
</dbReference>
<dbReference type="Pfam" id="PF00334">
    <property type="entry name" value="NDK"/>
    <property type="match status" value="1"/>
</dbReference>
<dbReference type="PRINTS" id="PR01243">
    <property type="entry name" value="NUCDPKINASE"/>
</dbReference>
<dbReference type="SMART" id="SM00562">
    <property type="entry name" value="NDK"/>
    <property type="match status" value="1"/>
</dbReference>
<dbReference type="SUPFAM" id="SSF54919">
    <property type="entry name" value="Nucleoside diphosphate kinase, NDK"/>
    <property type="match status" value="1"/>
</dbReference>
<dbReference type="PROSITE" id="PS00469">
    <property type="entry name" value="NDPK"/>
    <property type="match status" value="1"/>
</dbReference>
<dbReference type="PROSITE" id="PS51374">
    <property type="entry name" value="NDPK_LIKE"/>
    <property type="match status" value="1"/>
</dbReference>
<gene>
    <name evidence="1" type="primary">ndk</name>
    <name type="ordered locus">Ctha_1445</name>
</gene>
<evidence type="ECO:0000255" key="1">
    <source>
        <dbReference type="HAMAP-Rule" id="MF_00451"/>
    </source>
</evidence>
<feature type="chain" id="PRO_1000124947" description="Nucleoside diphosphate kinase">
    <location>
        <begin position="1"/>
        <end position="141"/>
    </location>
</feature>
<feature type="active site" description="Pros-phosphohistidine intermediate" evidence="1">
    <location>
        <position position="115"/>
    </location>
</feature>
<feature type="binding site" evidence="1">
    <location>
        <position position="9"/>
    </location>
    <ligand>
        <name>ATP</name>
        <dbReference type="ChEBI" id="CHEBI:30616"/>
    </ligand>
</feature>
<feature type="binding site" evidence="1">
    <location>
        <position position="57"/>
    </location>
    <ligand>
        <name>ATP</name>
        <dbReference type="ChEBI" id="CHEBI:30616"/>
    </ligand>
</feature>
<feature type="binding site" evidence="1">
    <location>
        <position position="85"/>
    </location>
    <ligand>
        <name>ATP</name>
        <dbReference type="ChEBI" id="CHEBI:30616"/>
    </ligand>
</feature>
<feature type="binding site" evidence="1">
    <location>
        <position position="91"/>
    </location>
    <ligand>
        <name>ATP</name>
        <dbReference type="ChEBI" id="CHEBI:30616"/>
    </ligand>
</feature>
<feature type="binding site" evidence="1">
    <location>
        <position position="102"/>
    </location>
    <ligand>
        <name>ATP</name>
        <dbReference type="ChEBI" id="CHEBI:30616"/>
    </ligand>
</feature>
<feature type="binding site" evidence="1">
    <location>
        <position position="112"/>
    </location>
    <ligand>
        <name>ATP</name>
        <dbReference type="ChEBI" id="CHEBI:30616"/>
    </ligand>
</feature>
<comment type="function">
    <text evidence="1">Major role in the synthesis of nucleoside triphosphates other than ATP. The ATP gamma phosphate is transferred to the NDP beta phosphate via a ping-pong mechanism, using a phosphorylated active-site intermediate.</text>
</comment>
<comment type="catalytic activity">
    <reaction evidence="1">
        <text>a 2'-deoxyribonucleoside 5'-diphosphate + ATP = a 2'-deoxyribonucleoside 5'-triphosphate + ADP</text>
        <dbReference type="Rhea" id="RHEA:44640"/>
        <dbReference type="ChEBI" id="CHEBI:30616"/>
        <dbReference type="ChEBI" id="CHEBI:61560"/>
        <dbReference type="ChEBI" id="CHEBI:73316"/>
        <dbReference type="ChEBI" id="CHEBI:456216"/>
        <dbReference type="EC" id="2.7.4.6"/>
    </reaction>
</comment>
<comment type="catalytic activity">
    <reaction evidence="1">
        <text>a ribonucleoside 5'-diphosphate + ATP = a ribonucleoside 5'-triphosphate + ADP</text>
        <dbReference type="Rhea" id="RHEA:18113"/>
        <dbReference type="ChEBI" id="CHEBI:30616"/>
        <dbReference type="ChEBI" id="CHEBI:57930"/>
        <dbReference type="ChEBI" id="CHEBI:61557"/>
        <dbReference type="ChEBI" id="CHEBI:456216"/>
        <dbReference type="EC" id="2.7.4.6"/>
    </reaction>
</comment>
<comment type="cofactor">
    <cofactor evidence="1">
        <name>Mg(2+)</name>
        <dbReference type="ChEBI" id="CHEBI:18420"/>
    </cofactor>
</comment>
<comment type="subunit">
    <text evidence="1">Homotetramer.</text>
</comment>
<comment type="subcellular location">
    <subcellularLocation>
        <location evidence="1">Cytoplasm</location>
    </subcellularLocation>
</comment>
<comment type="similarity">
    <text evidence="1">Belongs to the NDK family.</text>
</comment>